<proteinExistence type="predicted"/>
<protein>
    <recommendedName>
        <fullName>Putative YfeABCD regulator YfeE</fullName>
    </recommendedName>
</protein>
<name>YFEE_YERPE</name>
<comment type="function">
    <text>Putative regulator of YfeABCD, an ABC transporter locus involved in inorganic iron transport.</text>
</comment>
<comment type="subcellular location">
    <subcellularLocation>
        <location evidence="2">Cell membrane</location>
        <topology evidence="2">Multi-pass membrane protein</topology>
    </subcellularLocation>
</comment>
<comment type="similarity">
    <text evidence="2">To E.coli YniB.</text>
</comment>
<reference key="1">
    <citation type="submission" date="1996-03" db="EMBL/GenBank/DDBJ databases">
        <authorList>
            <person name="Bearden S.W."/>
        </authorList>
    </citation>
    <scope>NUCLEOTIDE SEQUENCE [GENOMIC DNA]</scope>
    <source>
        <strain>KIM6</strain>
    </source>
</reference>
<reference key="2">
    <citation type="journal article" date="2001" name="Nature">
        <title>Genome sequence of Yersinia pestis, the causative agent of plague.</title>
        <authorList>
            <person name="Parkhill J."/>
            <person name="Wren B.W."/>
            <person name="Thomson N.R."/>
            <person name="Titball R.W."/>
            <person name="Holden M.T.G."/>
            <person name="Prentice M.B."/>
            <person name="Sebaihia M."/>
            <person name="James K.D."/>
            <person name="Churcher C.M."/>
            <person name="Mungall K.L."/>
            <person name="Baker S."/>
            <person name="Basham D."/>
            <person name="Bentley S.D."/>
            <person name="Brooks K."/>
            <person name="Cerdeno-Tarraga A.-M."/>
            <person name="Chillingworth T."/>
            <person name="Cronin A."/>
            <person name="Davies R.M."/>
            <person name="Davis P."/>
            <person name="Dougan G."/>
            <person name="Feltwell T."/>
            <person name="Hamlin N."/>
            <person name="Holroyd S."/>
            <person name="Jagels K."/>
            <person name="Karlyshev A.V."/>
            <person name="Leather S."/>
            <person name="Moule S."/>
            <person name="Oyston P.C.F."/>
            <person name="Quail M.A."/>
            <person name="Rutherford K.M."/>
            <person name="Simmonds M."/>
            <person name="Skelton J."/>
            <person name="Stevens K."/>
            <person name="Whitehead S."/>
            <person name="Barrell B.G."/>
        </authorList>
    </citation>
    <scope>NUCLEOTIDE SEQUENCE [LARGE SCALE GENOMIC DNA]</scope>
    <source>
        <strain>CO-92 / Biovar Orientalis</strain>
    </source>
</reference>
<reference key="3">
    <citation type="journal article" date="2002" name="J. Bacteriol.">
        <title>Genome sequence of Yersinia pestis KIM.</title>
        <authorList>
            <person name="Deng W."/>
            <person name="Burland V."/>
            <person name="Plunkett G. III"/>
            <person name="Boutin A."/>
            <person name="Mayhew G.F."/>
            <person name="Liss P."/>
            <person name="Perna N.T."/>
            <person name="Rose D.J."/>
            <person name="Mau B."/>
            <person name="Zhou S."/>
            <person name="Schwartz D.C."/>
            <person name="Fetherston J.D."/>
            <person name="Lindler L.E."/>
            <person name="Brubaker R.R."/>
            <person name="Plano G.V."/>
            <person name="Straley S.C."/>
            <person name="McDonough K.A."/>
            <person name="Nilles M.L."/>
            <person name="Matson J.S."/>
            <person name="Blattner F.R."/>
            <person name="Perry R.D."/>
        </authorList>
    </citation>
    <scope>NUCLEOTIDE SEQUENCE [LARGE SCALE GENOMIC DNA]</scope>
    <source>
        <strain>KIM10+ / Biovar Mediaevalis</strain>
    </source>
</reference>
<reference key="4">
    <citation type="journal article" date="2004" name="DNA Res.">
        <title>Complete genome sequence of Yersinia pestis strain 91001, an isolate avirulent to humans.</title>
        <authorList>
            <person name="Song Y."/>
            <person name="Tong Z."/>
            <person name="Wang J."/>
            <person name="Wang L."/>
            <person name="Guo Z."/>
            <person name="Han Y."/>
            <person name="Zhang J."/>
            <person name="Pei D."/>
            <person name="Zhou D."/>
            <person name="Qin H."/>
            <person name="Pang X."/>
            <person name="Han Y."/>
            <person name="Zhai J."/>
            <person name="Li M."/>
            <person name="Cui B."/>
            <person name="Qi Z."/>
            <person name="Jin L."/>
            <person name="Dai R."/>
            <person name="Chen F."/>
            <person name="Li S."/>
            <person name="Ye C."/>
            <person name="Du Z."/>
            <person name="Lin W."/>
            <person name="Wang J."/>
            <person name="Yu J."/>
            <person name="Yang H."/>
            <person name="Wang J."/>
            <person name="Huang P."/>
            <person name="Yang R."/>
        </authorList>
    </citation>
    <scope>NUCLEOTIDE SEQUENCE [LARGE SCALE GENOMIC DNA]</scope>
    <source>
        <strain>91001 / Biovar Mediaevalis</strain>
    </source>
</reference>
<organism>
    <name type="scientific">Yersinia pestis</name>
    <dbReference type="NCBI Taxonomy" id="632"/>
    <lineage>
        <taxon>Bacteria</taxon>
        <taxon>Pseudomonadati</taxon>
        <taxon>Pseudomonadota</taxon>
        <taxon>Gammaproteobacteria</taxon>
        <taxon>Enterobacterales</taxon>
        <taxon>Yersiniaceae</taxon>
        <taxon>Yersinia</taxon>
    </lineage>
</organism>
<gene>
    <name type="primary">yfeE</name>
    <name type="ordered locus">YPO2445</name>
    <name type="ordered locus">y1891</name>
    <name type="ordered locus">YP_2232</name>
</gene>
<accession>Q56956</accession>
<accession>Q0WE79</accession>
<keyword id="KW-1003">Cell membrane</keyword>
<keyword id="KW-0472">Membrane</keyword>
<keyword id="KW-1185">Reference proteome</keyword>
<keyword id="KW-0812">Transmembrane</keyword>
<keyword id="KW-1133">Transmembrane helix</keyword>
<evidence type="ECO:0000255" key="1"/>
<evidence type="ECO:0000305" key="2"/>
<sequence>MTYQQAGRVAVIKRIAGWLVFIPALLSTLISIINFVYLYSQKGTGVNAVMLDFIHVMTDMARFNTPFLNIFWYNSPVPNLEQGLSAGNIMFFIIYMLIFVGLSLQASGARMSRQVRHIREGIEDQMILERAKGNEGHSREQLEEKIVLPHHTIFLQFFTLYILPSVIGVLGYFVIKLLGIMIQG</sequence>
<feature type="chain" id="PRO_0000169001" description="Putative YfeABCD regulator YfeE">
    <location>
        <begin position="1"/>
        <end position="184"/>
    </location>
</feature>
<feature type="transmembrane region" description="Helical" evidence="1">
    <location>
        <begin position="15"/>
        <end position="35"/>
    </location>
</feature>
<feature type="transmembrane region" description="Helical" evidence="1">
    <location>
        <begin position="84"/>
        <end position="104"/>
    </location>
</feature>
<feature type="transmembrane region" description="Helical" evidence="1">
    <location>
        <begin position="162"/>
        <end position="182"/>
    </location>
</feature>
<dbReference type="EMBL" id="U50903">
    <property type="protein sequence ID" value="AAC46151.1"/>
    <property type="molecule type" value="Genomic_DNA"/>
</dbReference>
<dbReference type="EMBL" id="AL590842">
    <property type="protein sequence ID" value="CAL21073.1"/>
    <property type="molecule type" value="Genomic_DNA"/>
</dbReference>
<dbReference type="EMBL" id="AE009952">
    <property type="protein sequence ID" value="AAM85458.1"/>
    <property type="molecule type" value="Genomic_DNA"/>
</dbReference>
<dbReference type="EMBL" id="AE017042">
    <property type="protein sequence ID" value="AAS62438.1"/>
    <property type="molecule type" value="Genomic_DNA"/>
</dbReference>
<dbReference type="PIR" id="AF0298">
    <property type="entry name" value="AF0298"/>
</dbReference>
<dbReference type="RefSeq" id="WP_002211847.1">
    <property type="nucleotide sequence ID" value="NZ_WUCM01000025.1"/>
</dbReference>
<dbReference type="RefSeq" id="YP_002347409.1">
    <property type="nucleotide sequence ID" value="NC_003143.1"/>
</dbReference>
<dbReference type="IntAct" id="Q56956">
    <property type="interactions" value="1"/>
</dbReference>
<dbReference type="STRING" id="214092.YPO2445"/>
<dbReference type="PaxDb" id="214092-YPO2445"/>
<dbReference type="DNASU" id="1146838"/>
<dbReference type="EnsemblBacteria" id="AAS62438">
    <property type="protein sequence ID" value="AAS62438"/>
    <property type="gene ID" value="YP_2232"/>
</dbReference>
<dbReference type="KEGG" id="ype:YPO2445"/>
<dbReference type="KEGG" id="ypk:y1891"/>
<dbReference type="KEGG" id="ypm:YP_2232"/>
<dbReference type="PATRIC" id="fig|1028802.3.peg.487"/>
<dbReference type="eggNOG" id="ENOG502Z8K9">
    <property type="taxonomic scope" value="Bacteria"/>
</dbReference>
<dbReference type="HOGENOM" id="CLU_129278_0_0_6"/>
<dbReference type="OMA" id="MVRFNTP"/>
<dbReference type="OrthoDB" id="6870983at2"/>
<dbReference type="Proteomes" id="UP000000815">
    <property type="component" value="Chromosome"/>
</dbReference>
<dbReference type="Proteomes" id="UP000001019">
    <property type="component" value="Chromosome"/>
</dbReference>
<dbReference type="Proteomes" id="UP000002490">
    <property type="component" value="Chromosome"/>
</dbReference>
<dbReference type="GO" id="GO:0005886">
    <property type="term" value="C:plasma membrane"/>
    <property type="evidence" value="ECO:0007669"/>
    <property type="project" value="UniProtKB-SubCell"/>
</dbReference>
<dbReference type="InterPro" id="IPR025229">
    <property type="entry name" value="YniB-like"/>
</dbReference>
<dbReference type="Pfam" id="PF14002">
    <property type="entry name" value="YniB"/>
    <property type="match status" value="1"/>
</dbReference>